<comment type="function">
    <text evidence="4">Promotes matrix assembly.</text>
</comment>
<comment type="subunit">
    <text evidence="4">Binds to heparin, dermatan sulfate and chondroitin sulfate.</text>
</comment>
<comment type="subcellular location">
    <subcellularLocation>
        <location evidence="4">Secreted</location>
    </subcellularLocation>
</comment>
<comment type="alternative products">
    <event type="alternative splicing"/>
    <isoform>
        <id>Q8BZQ2-1</id>
        <name>1</name>
        <sequence type="displayed"/>
    </isoform>
    <isoform>
        <id>Q8BZQ2-2</id>
        <name>2</name>
        <sequence type="described" ref="VSP_036331"/>
    </isoform>
</comment>
<comment type="tissue specificity">
    <text evidence="4">Present in kidney renal tubules (at protein level).</text>
</comment>
<comment type="developmental stage">
    <text evidence="3">Expressed in the developing oropharynx and nasopharynx at 13.5 dpc, in the mandible at 14.5 dpc and in the cartilage primordia of the nasal bones, palate and tooth germs at 17.5 dpc. Detected in the embryonic liver at 13.5, 14.5 and 17.5 dpc.</text>
</comment>
<evidence type="ECO:0000255" key="1"/>
<evidence type="ECO:0000255" key="2">
    <source>
        <dbReference type="PROSITE-ProRule" id="PRU00123"/>
    </source>
</evidence>
<evidence type="ECO:0000269" key="3">
    <source>
    </source>
</evidence>
<evidence type="ECO:0000269" key="4">
    <source>
    </source>
</evidence>
<evidence type="ECO:0000303" key="5">
    <source>
    </source>
</evidence>
<evidence type="ECO:0000303" key="6">
    <source>
    </source>
</evidence>
<evidence type="ECO:0000305" key="7"/>
<sequence length="495" mass="55432">MSCLLNNMVLMGLALLVCGVQAFFLPNTTSLEKLLSKYQHAEPHSRVRRAIPMSDRQEILMLHNKLRGQVYPPASNMEHMTWDEELERSAAAWAHRCLWEHGPAGLLRSIGQNLAVHWGRYRSPGFHVQSWYDEVKDYTYPYPHECTPRCRERCSGPMCTHYTQMVWATTNKIGCAVHTCRNMNVWGDTWENAVYLVCNYSPKGNWIGEAPYKHGRPCSECPSSYGGGCLNNLCHRAEKPHKHKPEVDMMNEVESPPAPEETHVWVQPRVIKTKKTPVINFMTQVVHCDTKMKDSCKGSTCNRYQCPAGCLSNKAKVFGSLFYESSSSICRAAIHYGVIDDRGGLVDVTRNGMVPFFVKSQKNGMESLSKYKPSSSFTVSKVTETAVDCHATVAQLCPFEKPATHCPRIQCPARCGEEPSYWAPVYGTNIYADTSSICKAAVHAGVIVDEVGGYADVMPVDKKKSYVGSLRNGVQSESLNTPQNGNAFRIFAVRQ</sequence>
<dbReference type="EMBL" id="AK019034">
    <property type="protein sequence ID" value="BAB31519.2"/>
    <property type="molecule type" value="mRNA"/>
</dbReference>
<dbReference type="EMBL" id="AK033858">
    <property type="protein sequence ID" value="BAC28498.1"/>
    <property type="molecule type" value="mRNA"/>
</dbReference>
<dbReference type="EMBL" id="AK154308">
    <property type="protein sequence ID" value="BAE32505.1"/>
    <property type="molecule type" value="mRNA"/>
</dbReference>
<dbReference type="EMBL" id="CH466525">
    <property type="protein sequence ID" value="EDL11621.1"/>
    <property type="molecule type" value="Genomic_DNA"/>
</dbReference>
<dbReference type="EMBL" id="CH466525">
    <property type="protein sequence ID" value="EDL11622.1"/>
    <property type="molecule type" value="Genomic_DNA"/>
</dbReference>
<dbReference type="EMBL" id="BC090642">
    <property type="protein sequence ID" value="AAH90642.1"/>
    <property type="molecule type" value="mRNA"/>
</dbReference>
<dbReference type="CCDS" id="CCDS22714.1">
    <molecule id="Q8BZQ2-2"/>
</dbReference>
<dbReference type="CCDS" id="CCDS80939.1">
    <molecule id="Q8BZQ2-1"/>
</dbReference>
<dbReference type="RefSeq" id="NP_001297564.1">
    <molecule id="Q8BZQ2-1"/>
    <property type="nucleotide sequence ID" value="NM_001310635.1"/>
</dbReference>
<dbReference type="RefSeq" id="NP_084485.1">
    <molecule id="Q8BZQ2-2"/>
    <property type="nucleotide sequence ID" value="NM_030209.4"/>
</dbReference>
<dbReference type="RefSeq" id="XP_006531571.1">
    <molecule id="Q8BZQ2-1"/>
    <property type="nucleotide sequence ID" value="XM_006531508.1"/>
</dbReference>
<dbReference type="RefSeq" id="XP_006531572.1">
    <molecule id="Q8BZQ2-2"/>
    <property type="nucleotide sequence ID" value="XM_006531509.1"/>
</dbReference>
<dbReference type="SMR" id="Q8BZQ2"/>
<dbReference type="BioGRID" id="219687">
    <property type="interactions" value="1"/>
</dbReference>
<dbReference type="FunCoup" id="Q8BZQ2">
    <property type="interactions" value="207"/>
</dbReference>
<dbReference type="STRING" id="10090.ENSMUSP00000034282"/>
<dbReference type="GlyCosmos" id="Q8BZQ2">
    <property type="glycosylation" value="1 site, No reported glycans"/>
</dbReference>
<dbReference type="GlyGen" id="Q8BZQ2">
    <property type="glycosylation" value="1 site"/>
</dbReference>
<dbReference type="iPTMnet" id="Q8BZQ2"/>
<dbReference type="PhosphoSitePlus" id="Q8BZQ2"/>
<dbReference type="CPTAC" id="non-CPTAC-3455"/>
<dbReference type="PaxDb" id="10090-ENSMUSP00000122962"/>
<dbReference type="PeptideAtlas" id="Q8BZQ2"/>
<dbReference type="ProteomicsDB" id="285334">
    <molecule id="Q8BZQ2-1"/>
</dbReference>
<dbReference type="ProteomicsDB" id="285335">
    <molecule id="Q8BZQ2-2"/>
</dbReference>
<dbReference type="Antibodypedia" id="30609">
    <property type="antibodies" value="132 antibodies from 23 providers"/>
</dbReference>
<dbReference type="DNASU" id="78892"/>
<dbReference type="Ensembl" id="ENSMUST00000034282.16">
    <molecule id="Q8BZQ2-1"/>
    <property type="protein sequence ID" value="ENSMUSP00000034282.10"/>
    <property type="gene ID" value="ENSMUSG00000031825.17"/>
</dbReference>
<dbReference type="Ensembl" id="ENSMUST00000108972.4">
    <molecule id="Q8BZQ2-2"/>
    <property type="protein sequence ID" value="ENSMUSP00000104600.4"/>
    <property type="gene ID" value="ENSMUSG00000031825.17"/>
</dbReference>
<dbReference type="Ensembl" id="ENSMUST00000132583.8">
    <molecule id="Q8BZQ2-2"/>
    <property type="protein sequence ID" value="ENSMUSP00000122962.2"/>
    <property type="gene ID" value="ENSMUSG00000031825.17"/>
</dbReference>
<dbReference type="GeneID" id="78892"/>
<dbReference type="KEGG" id="mmu:78892"/>
<dbReference type="UCSC" id="uc009nqq.2">
    <molecule id="Q8BZQ2-2"/>
    <property type="organism name" value="mouse"/>
</dbReference>
<dbReference type="UCSC" id="uc012glv.1">
    <molecule id="Q8BZQ2-1"/>
    <property type="organism name" value="mouse"/>
</dbReference>
<dbReference type="AGR" id="MGI:1926142"/>
<dbReference type="CTD" id="83716"/>
<dbReference type="MGI" id="MGI:1926142">
    <property type="gene designation" value="Crispld2"/>
</dbReference>
<dbReference type="VEuPathDB" id="HostDB:ENSMUSG00000031825"/>
<dbReference type="eggNOG" id="KOG3017">
    <property type="taxonomic scope" value="Eukaryota"/>
</dbReference>
<dbReference type="GeneTree" id="ENSGT00940000157410"/>
<dbReference type="HOGENOM" id="CLU_042287_0_0_1"/>
<dbReference type="InParanoid" id="Q8BZQ2"/>
<dbReference type="OMA" id="WVQPRVT"/>
<dbReference type="OrthoDB" id="414826at2759"/>
<dbReference type="PhylomeDB" id="Q8BZQ2"/>
<dbReference type="TreeFam" id="TF316148"/>
<dbReference type="Reactome" id="R-MMU-6798695">
    <property type="pathway name" value="Neutrophil degranulation"/>
</dbReference>
<dbReference type="BioGRID-ORCS" id="78892">
    <property type="hits" value="2 hits in 77 CRISPR screens"/>
</dbReference>
<dbReference type="ChiTaRS" id="Crispld2">
    <property type="organism name" value="mouse"/>
</dbReference>
<dbReference type="PRO" id="PR:Q8BZQ2"/>
<dbReference type="Proteomes" id="UP000000589">
    <property type="component" value="Chromosome 8"/>
</dbReference>
<dbReference type="RNAct" id="Q8BZQ2">
    <property type="molecule type" value="protein"/>
</dbReference>
<dbReference type="Bgee" id="ENSMUSG00000031825">
    <property type="expression patterns" value="Expressed in iris and 173 other cell types or tissues"/>
</dbReference>
<dbReference type="GO" id="GO:0031012">
    <property type="term" value="C:extracellular matrix"/>
    <property type="evidence" value="ECO:0000314"/>
    <property type="project" value="MGI"/>
</dbReference>
<dbReference type="GO" id="GO:0005576">
    <property type="term" value="C:extracellular region"/>
    <property type="evidence" value="ECO:0007669"/>
    <property type="project" value="UniProtKB-SubCell"/>
</dbReference>
<dbReference type="GO" id="GO:0030133">
    <property type="term" value="C:transport vesicle"/>
    <property type="evidence" value="ECO:0007669"/>
    <property type="project" value="Ensembl"/>
</dbReference>
<dbReference type="GO" id="GO:0005539">
    <property type="term" value="F:glycosaminoglycan binding"/>
    <property type="evidence" value="ECO:0000314"/>
    <property type="project" value="MGI"/>
</dbReference>
<dbReference type="GO" id="GO:0008201">
    <property type="term" value="F:heparin binding"/>
    <property type="evidence" value="ECO:0000314"/>
    <property type="project" value="MGI"/>
</dbReference>
<dbReference type="GO" id="GO:0030198">
    <property type="term" value="P:extracellular matrix organization"/>
    <property type="evidence" value="ECO:0000314"/>
    <property type="project" value="MGI"/>
</dbReference>
<dbReference type="GO" id="GO:0060325">
    <property type="term" value="P:face morphogenesis"/>
    <property type="evidence" value="ECO:0007669"/>
    <property type="project" value="Ensembl"/>
</dbReference>
<dbReference type="FunFam" id="3.40.33.10:FF:000001">
    <property type="entry name" value="Cysteine-rich secretory protein LCCL domain containing 1"/>
    <property type="match status" value="1"/>
</dbReference>
<dbReference type="FunFam" id="2.170.130.20:FF:000001">
    <property type="entry name" value="Cysteine-rich secretory protein LCCL domain-containing 1"/>
    <property type="match status" value="2"/>
</dbReference>
<dbReference type="Gene3D" id="3.40.33.10">
    <property type="entry name" value="CAP"/>
    <property type="match status" value="1"/>
</dbReference>
<dbReference type="Gene3D" id="2.170.130.20">
    <property type="entry name" value="LCCL-like domain"/>
    <property type="match status" value="2"/>
</dbReference>
<dbReference type="InterPro" id="IPR018244">
    <property type="entry name" value="Allrgn_V5/Tpx1_CS"/>
</dbReference>
<dbReference type="InterPro" id="IPR014044">
    <property type="entry name" value="CAP_dom"/>
</dbReference>
<dbReference type="InterPro" id="IPR035940">
    <property type="entry name" value="CAP_sf"/>
</dbReference>
<dbReference type="InterPro" id="IPR051957">
    <property type="entry name" value="CRISP-LCCL_domain"/>
</dbReference>
<dbReference type="InterPro" id="IPR001283">
    <property type="entry name" value="CRISP-related"/>
</dbReference>
<dbReference type="InterPro" id="IPR004043">
    <property type="entry name" value="LCCL"/>
</dbReference>
<dbReference type="InterPro" id="IPR036609">
    <property type="entry name" value="LCCL_sf"/>
</dbReference>
<dbReference type="PANTHER" id="PTHR31331:SF1">
    <property type="entry name" value="CYSTEINE RICH SECRETORY PROTEIN LCCL DOMAIN CONTAINING 2"/>
    <property type="match status" value="1"/>
</dbReference>
<dbReference type="PANTHER" id="PTHR31331">
    <property type="entry name" value="LCCL DOMAIN PROTEIN (AFU_ORTHOLOGUE AFUA_5G08630)"/>
    <property type="match status" value="1"/>
</dbReference>
<dbReference type="Pfam" id="PF00188">
    <property type="entry name" value="CAP"/>
    <property type="match status" value="1"/>
</dbReference>
<dbReference type="Pfam" id="PF03815">
    <property type="entry name" value="LCCL"/>
    <property type="match status" value="2"/>
</dbReference>
<dbReference type="PRINTS" id="PR00837">
    <property type="entry name" value="V5TPXLIKE"/>
</dbReference>
<dbReference type="SMART" id="SM00603">
    <property type="entry name" value="LCCL"/>
    <property type="match status" value="2"/>
</dbReference>
<dbReference type="SMART" id="SM00198">
    <property type="entry name" value="SCP"/>
    <property type="match status" value="1"/>
</dbReference>
<dbReference type="SUPFAM" id="SSF69848">
    <property type="entry name" value="LCCL domain"/>
    <property type="match status" value="2"/>
</dbReference>
<dbReference type="SUPFAM" id="SSF55797">
    <property type="entry name" value="PR-1-like"/>
    <property type="match status" value="1"/>
</dbReference>
<dbReference type="PROSITE" id="PS01010">
    <property type="entry name" value="CRISP_2"/>
    <property type="match status" value="1"/>
</dbReference>
<dbReference type="PROSITE" id="PS50820">
    <property type="entry name" value="LCCL"/>
    <property type="match status" value="2"/>
</dbReference>
<reference key="1">
    <citation type="journal article" date="2005" name="Science">
        <title>The transcriptional landscape of the mammalian genome.</title>
        <authorList>
            <person name="Carninci P."/>
            <person name="Kasukawa T."/>
            <person name="Katayama S."/>
            <person name="Gough J."/>
            <person name="Frith M.C."/>
            <person name="Maeda N."/>
            <person name="Oyama R."/>
            <person name="Ravasi T."/>
            <person name="Lenhard B."/>
            <person name="Wells C."/>
            <person name="Kodzius R."/>
            <person name="Shimokawa K."/>
            <person name="Bajic V.B."/>
            <person name="Brenner S.E."/>
            <person name="Batalov S."/>
            <person name="Forrest A.R."/>
            <person name="Zavolan M."/>
            <person name="Davis M.J."/>
            <person name="Wilming L.G."/>
            <person name="Aidinis V."/>
            <person name="Allen J.E."/>
            <person name="Ambesi-Impiombato A."/>
            <person name="Apweiler R."/>
            <person name="Aturaliya R.N."/>
            <person name="Bailey T.L."/>
            <person name="Bansal M."/>
            <person name="Baxter L."/>
            <person name="Beisel K.W."/>
            <person name="Bersano T."/>
            <person name="Bono H."/>
            <person name="Chalk A.M."/>
            <person name="Chiu K.P."/>
            <person name="Choudhary V."/>
            <person name="Christoffels A."/>
            <person name="Clutterbuck D.R."/>
            <person name="Crowe M.L."/>
            <person name="Dalla E."/>
            <person name="Dalrymple B.P."/>
            <person name="de Bono B."/>
            <person name="Della Gatta G."/>
            <person name="di Bernardo D."/>
            <person name="Down T."/>
            <person name="Engstrom P."/>
            <person name="Fagiolini M."/>
            <person name="Faulkner G."/>
            <person name="Fletcher C.F."/>
            <person name="Fukushima T."/>
            <person name="Furuno M."/>
            <person name="Futaki S."/>
            <person name="Gariboldi M."/>
            <person name="Georgii-Hemming P."/>
            <person name="Gingeras T.R."/>
            <person name="Gojobori T."/>
            <person name="Green R.E."/>
            <person name="Gustincich S."/>
            <person name="Harbers M."/>
            <person name="Hayashi Y."/>
            <person name="Hensch T.K."/>
            <person name="Hirokawa N."/>
            <person name="Hill D."/>
            <person name="Huminiecki L."/>
            <person name="Iacono M."/>
            <person name="Ikeo K."/>
            <person name="Iwama A."/>
            <person name="Ishikawa T."/>
            <person name="Jakt M."/>
            <person name="Kanapin A."/>
            <person name="Katoh M."/>
            <person name="Kawasawa Y."/>
            <person name="Kelso J."/>
            <person name="Kitamura H."/>
            <person name="Kitano H."/>
            <person name="Kollias G."/>
            <person name="Krishnan S.P."/>
            <person name="Kruger A."/>
            <person name="Kummerfeld S.K."/>
            <person name="Kurochkin I.V."/>
            <person name="Lareau L.F."/>
            <person name="Lazarevic D."/>
            <person name="Lipovich L."/>
            <person name="Liu J."/>
            <person name="Liuni S."/>
            <person name="McWilliam S."/>
            <person name="Madan Babu M."/>
            <person name="Madera M."/>
            <person name="Marchionni L."/>
            <person name="Matsuda H."/>
            <person name="Matsuzawa S."/>
            <person name="Miki H."/>
            <person name="Mignone F."/>
            <person name="Miyake S."/>
            <person name="Morris K."/>
            <person name="Mottagui-Tabar S."/>
            <person name="Mulder N."/>
            <person name="Nakano N."/>
            <person name="Nakauchi H."/>
            <person name="Ng P."/>
            <person name="Nilsson R."/>
            <person name="Nishiguchi S."/>
            <person name="Nishikawa S."/>
            <person name="Nori F."/>
            <person name="Ohara O."/>
            <person name="Okazaki Y."/>
            <person name="Orlando V."/>
            <person name="Pang K.C."/>
            <person name="Pavan W.J."/>
            <person name="Pavesi G."/>
            <person name="Pesole G."/>
            <person name="Petrovsky N."/>
            <person name="Piazza S."/>
            <person name="Reed J."/>
            <person name="Reid J.F."/>
            <person name="Ring B.Z."/>
            <person name="Ringwald M."/>
            <person name="Rost B."/>
            <person name="Ruan Y."/>
            <person name="Salzberg S.L."/>
            <person name="Sandelin A."/>
            <person name="Schneider C."/>
            <person name="Schoenbach C."/>
            <person name="Sekiguchi K."/>
            <person name="Semple C.A."/>
            <person name="Seno S."/>
            <person name="Sessa L."/>
            <person name="Sheng Y."/>
            <person name="Shibata Y."/>
            <person name="Shimada H."/>
            <person name="Shimada K."/>
            <person name="Silva D."/>
            <person name="Sinclair B."/>
            <person name="Sperling S."/>
            <person name="Stupka E."/>
            <person name="Sugiura K."/>
            <person name="Sultana R."/>
            <person name="Takenaka Y."/>
            <person name="Taki K."/>
            <person name="Tammoja K."/>
            <person name="Tan S.L."/>
            <person name="Tang S."/>
            <person name="Taylor M.S."/>
            <person name="Tegner J."/>
            <person name="Teichmann S.A."/>
            <person name="Ueda H.R."/>
            <person name="van Nimwegen E."/>
            <person name="Verardo R."/>
            <person name="Wei C.L."/>
            <person name="Yagi K."/>
            <person name="Yamanishi H."/>
            <person name="Zabarovsky E."/>
            <person name="Zhu S."/>
            <person name="Zimmer A."/>
            <person name="Hide W."/>
            <person name="Bult C."/>
            <person name="Grimmond S.M."/>
            <person name="Teasdale R.D."/>
            <person name="Liu E.T."/>
            <person name="Brusic V."/>
            <person name="Quackenbush J."/>
            <person name="Wahlestedt C."/>
            <person name="Mattick J.S."/>
            <person name="Hume D.A."/>
            <person name="Kai C."/>
            <person name="Sasaki D."/>
            <person name="Tomaru Y."/>
            <person name="Fukuda S."/>
            <person name="Kanamori-Katayama M."/>
            <person name="Suzuki M."/>
            <person name="Aoki J."/>
            <person name="Arakawa T."/>
            <person name="Iida J."/>
            <person name="Imamura K."/>
            <person name="Itoh M."/>
            <person name="Kato T."/>
            <person name="Kawaji H."/>
            <person name="Kawagashira N."/>
            <person name="Kawashima T."/>
            <person name="Kojima M."/>
            <person name="Kondo S."/>
            <person name="Konno H."/>
            <person name="Nakano K."/>
            <person name="Ninomiya N."/>
            <person name="Nishio T."/>
            <person name="Okada M."/>
            <person name="Plessy C."/>
            <person name="Shibata K."/>
            <person name="Shiraki T."/>
            <person name="Suzuki S."/>
            <person name="Tagami M."/>
            <person name="Waki K."/>
            <person name="Watahiki A."/>
            <person name="Okamura-Oho Y."/>
            <person name="Suzuki H."/>
            <person name="Kawai J."/>
            <person name="Hayashizaki Y."/>
        </authorList>
    </citation>
    <scope>NUCLEOTIDE SEQUENCE [LARGE SCALE MRNA] (ISOFORMS 1 AND 2)</scope>
    <source>
        <strain>C57BL/6J</strain>
        <strain>NOD</strain>
        <tissue>Diencephalon</tissue>
        <tissue>Pancreas</tissue>
    </source>
</reference>
<reference key="2">
    <citation type="submission" date="2005-07" db="EMBL/GenBank/DDBJ databases">
        <authorList>
            <person name="Mural R.J."/>
            <person name="Adams M.D."/>
            <person name="Myers E.W."/>
            <person name="Smith H.O."/>
            <person name="Venter J.C."/>
        </authorList>
    </citation>
    <scope>NUCLEOTIDE SEQUENCE [LARGE SCALE GENOMIC DNA]</scope>
</reference>
<reference key="3">
    <citation type="journal article" date="2004" name="Genome Res.">
        <title>The status, quality, and expansion of the NIH full-length cDNA project: the Mammalian Gene Collection (MGC).</title>
        <authorList>
            <consortium name="The MGC Project Team"/>
        </authorList>
    </citation>
    <scope>NUCLEOTIDE SEQUENCE [LARGE SCALE MRNA] (ISOFORM 2)</scope>
    <source>
        <strain>C57BL/6J</strain>
        <tissue>Eye</tissue>
    </source>
</reference>
<reference key="4">
    <citation type="journal article" date="2007" name="Hum. Mol. Genet.">
        <title>CRISPLD2: a novel NSCLP candidate gene.</title>
        <authorList>
            <person name="Chiquet B.T."/>
            <person name="Lidral A.C."/>
            <person name="Stal S."/>
            <person name="Mulliken J.B."/>
            <person name="Moreno L.M."/>
            <person name="Arcos-Burgos M."/>
            <person name="Valencia-Ramirez C."/>
            <person name="Blanton S.H."/>
            <person name="Hecht J.T."/>
        </authorList>
    </citation>
    <scope>DEVELOPMENTAL STAGE</scope>
</reference>
<reference key="5">
    <citation type="journal article" date="2008" name="Proc. Natl. Acad. Sci. U.S.A.">
        <title>Transcriptome-based systematic identification of extracellular matrix proteins.</title>
        <authorList>
            <person name="Manabe R."/>
            <person name="Tsutsui K."/>
            <person name="Yamada T."/>
            <person name="Kimura M."/>
            <person name="Nakano I."/>
            <person name="Shimono C."/>
            <person name="Sanzen N."/>
            <person name="Furutani Y."/>
            <person name="Fukuda T."/>
            <person name="Oguri Y."/>
            <person name="Shimamoto K."/>
            <person name="Kiyozumi D."/>
            <person name="Sato Y."/>
            <person name="Sado Y."/>
            <person name="Senoo H."/>
            <person name="Yamashina S."/>
            <person name="Fukuda S."/>
            <person name="Kawai J."/>
            <person name="Sugiura N."/>
            <person name="Kimata K."/>
            <person name="Hayashizaki Y."/>
            <person name="Sekiguchi K."/>
        </authorList>
    </citation>
    <scope>FUNCTION</scope>
    <scope>SUBUNIT</scope>
    <scope>SUBCELLULAR LOCATION</scope>
    <scope>TISSUE SPECIFICITY</scope>
</reference>
<accession>Q8BZQ2</accession>
<accession>Q3U4C7</accession>
<accession>Q9D2R3</accession>
<keyword id="KW-0025">Alternative splicing</keyword>
<keyword id="KW-1015">Disulfide bond</keyword>
<keyword id="KW-0325">Glycoprotein</keyword>
<keyword id="KW-1185">Reference proteome</keyword>
<keyword id="KW-0677">Repeat</keyword>
<keyword id="KW-0964">Secreted</keyword>
<keyword id="KW-0732">Signal</keyword>
<proteinExistence type="evidence at protein level"/>
<protein>
    <recommendedName>
        <fullName>Cysteine-rich secretory protein LCCL domain-containing 2</fullName>
    </recommendedName>
    <alternativeName>
        <fullName>Coffeecrisp</fullName>
    </alternativeName>
</protein>
<name>CRLD2_MOUSE</name>
<feature type="signal peptide" evidence="1">
    <location>
        <begin position="1"/>
        <end position="22"/>
    </location>
</feature>
<feature type="chain" id="PRO_0000363885" description="Cysteine-rich secretory protein LCCL domain-containing 2">
    <location>
        <begin position="23"/>
        <end position="495"/>
    </location>
</feature>
<feature type="domain" description="SCP">
    <location>
        <begin position="60"/>
        <end position="200"/>
    </location>
</feature>
<feature type="domain" description="LCCL 1" evidence="2">
    <location>
        <begin position="282"/>
        <end position="377"/>
    </location>
</feature>
<feature type="domain" description="LCCL 2" evidence="2">
    <location>
        <begin position="383"/>
        <end position="486"/>
    </location>
</feature>
<feature type="glycosylation site" description="N-linked (GlcNAc...) asparagine" evidence="1">
    <location>
        <position position="27"/>
    </location>
</feature>
<feature type="disulfide bond" evidence="2">
    <location>
        <begin position="288"/>
        <end position="306"/>
    </location>
</feature>
<feature type="disulfide bond" evidence="2">
    <location>
        <begin position="310"/>
        <end position="330"/>
    </location>
</feature>
<feature type="disulfide bond" evidence="2">
    <location>
        <begin position="389"/>
        <end position="411"/>
    </location>
</feature>
<feature type="disulfide bond" evidence="2">
    <location>
        <begin position="415"/>
        <end position="438"/>
    </location>
</feature>
<feature type="splice variant" id="VSP_036331" description="In isoform 2." evidence="5 6">
    <location>
        <position position="237"/>
    </location>
</feature>
<feature type="sequence conflict" description="In Ref. 1; BAE32505." evidence="7" ref="1">
    <original>D</original>
    <variation>G</variation>
    <location>
        <position position="55"/>
    </location>
</feature>
<organism>
    <name type="scientific">Mus musculus</name>
    <name type="common">Mouse</name>
    <dbReference type="NCBI Taxonomy" id="10090"/>
    <lineage>
        <taxon>Eukaryota</taxon>
        <taxon>Metazoa</taxon>
        <taxon>Chordata</taxon>
        <taxon>Craniata</taxon>
        <taxon>Vertebrata</taxon>
        <taxon>Euteleostomi</taxon>
        <taxon>Mammalia</taxon>
        <taxon>Eutheria</taxon>
        <taxon>Euarchontoglires</taxon>
        <taxon>Glires</taxon>
        <taxon>Rodentia</taxon>
        <taxon>Myomorpha</taxon>
        <taxon>Muroidea</taxon>
        <taxon>Muridae</taxon>
        <taxon>Murinae</taxon>
        <taxon>Mus</taxon>
        <taxon>Mus</taxon>
    </lineage>
</organism>
<gene>
    <name type="primary">Crispld2</name>
</gene>